<accession>P28919</accession>
<accession>Q6DLG1</accession>
<protein>
    <recommendedName>
        <fullName evidence="1">Alkaline nuclease</fullName>
        <ecNumber evidence="1">3.1.-.-</ecNumber>
    </recommendedName>
</protein>
<organismHost>
    <name type="scientific">Equus caballus</name>
    <name type="common">Horse</name>
    <dbReference type="NCBI Taxonomy" id="9796"/>
</organismHost>
<comment type="function">
    <text evidence="1">Plays a role in processing non linear or branched viral DNA intermediates in order to promote the production of mature packaged unit-length linear progeny viral DNA molecules. Exhibits endonuclease and exonuclease activities and accepts both double-stranded and single-stranded DNA as substrate. Exonuclease digestion of DNA is in the 5'-&gt; 3' direction and the products are 5'-monophosphate nucleosides. Additionally, forms a recombinase with the major DNA-binding protein, which displays strand exchange activity.</text>
</comment>
<comment type="subunit">
    <text evidence="1">Interacts with major DNA-binding protein; this interaction increases the nuclease processivity of the alkaline exonuclease.</text>
</comment>
<comment type="subcellular location">
    <subcellularLocation>
        <location evidence="1">Host nucleus</location>
    </subcellularLocation>
    <subcellularLocation>
        <location evidence="1">Host cytoplasm</location>
    </subcellularLocation>
</comment>
<comment type="similarity">
    <text evidence="1">Belongs to the herpesviridae alkaline nuclease family.</text>
</comment>
<dbReference type="EC" id="3.1.-.-" evidence="1"/>
<dbReference type="EMBL" id="AY665713">
    <property type="protein sequence ID" value="AAT67307.1"/>
    <property type="molecule type" value="Genomic_DNA"/>
</dbReference>
<dbReference type="PIR" id="E36800">
    <property type="entry name" value="NDBEE3"/>
</dbReference>
<dbReference type="SMR" id="P28919"/>
<dbReference type="KEGG" id="vg:2948580"/>
<dbReference type="Proteomes" id="UP000001189">
    <property type="component" value="Segment"/>
</dbReference>
<dbReference type="GO" id="GO:0030430">
    <property type="term" value="C:host cell cytoplasm"/>
    <property type="evidence" value="ECO:0007669"/>
    <property type="project" value="UniProtKB-SubCell"/>
</dbReference>
<dbReference type="GO" id="GO:0042025">
    <property type="term" value="C:host cell nucleus"/>
    <property type="evidence" value="ECO:0007669"/>
    <property type="project" value="UniProtKB-SubCell"/>
</dbReference>
<dbReference type="GO" id="GO:0003677">
    <property type="term" value="F:DNA binding"/>
    <property type="evidence" value="ECO:0007669"/>
    <property type="project" value="InterPro"/>
</dbReference>
<dbReference type="GO" id="GO:0004519">
    <property type="term" value="F:endonuclease activity"/>
    <property type="evidence" value="ECO:0007669"/>
    <property type="project" value="UniProtKB-KW"/>
</dbReference>
<dbReference type="GO" id="GO:0004527">
    <property type="term" value="F:exonuclease activity"/>
    <property type="evidence" value="ECO:0007669"/>
    <property type="project" value="UniProtKB-KW"/>
</dbReference>
<dbReference type="Gene3D" id="3.90.320.10">
    <property type="match status" value="1"/>
</dbReference>
<dbReference type="HAMAP" id="MF_04009">
    <property type="entry name" value="HSV_AN"/>
    <property type="match status" value="1"/>
</dbReference>
<dbReference type="InterPro" id="IPR001616">
    <property type="entry name" value="Herpes_alk_exo"/>
</dbReference>
<dbReference type="InterPro" id="IPR011604">
    <property type="entry name" value="PDDEXK-like_dom_sf"/>
</dbReference>
<dbReference type="InterPro" id="IPR011335">
    <property type="entry name" value="Restrct_endonuc-II-like"/>
</dbReference>
<dbReference type="InterPro" id="IPR034720">
    <property type="entry name" value="Viral_alk_exo"/>
</dbReference>
<dbReference type="Pfam" id="PF01771">
    <property type="entry name" value="Viral_alk_exo"/>
    <property type="match status" value="1"/>
</dbReference>
<dbReference type="PRINTS" id="PR00924">
    <property type="entry name" value="ALKEXNUCLASE"/>
</dbReference>
<dbReference type="SUPFAM" id="SSF52980">
    <property type="entry name" value="Restriction endonuclease-like"/>
    <property type="match status" value="1"/>
</dbReference>
<keyword id="KW-0255">Endonuclease</keyword>
<keyword id="KW-0269">Exonuclease</keyword>
<keyword id="KW-1035">Host cytoplasm</keyword>
<keyword id="KW-1048">Host nucleus</keyword>
<keyword id="KW-0945">Host-virus interaction</keyword>
<keyword id="KW-0378">Hydrolase</keyword>
<keyword id="KW-0540">Nuclease</keyword>
<keyword id="KW-1185">Reference proteome</keyword>
<gene>
    <name type="ordered locus">50</name>
</gene>
<feature type="chain" id="PRO_0000115692" description="Alkaline nuclease">
    <location>
        <begin position="1"/>
        <end position="565"/>
    </location>
</feature>
<feature type="site" description="Required for function" evidence="1">
    <location>
        <position position="229"/>
    </location>
</feature>
<feature type="site" description="Required for function" evidence="1">
    <location>
        <position position="292"/>
    </location>
</feature>
<feature type="site" description="Required for function" evidence="1">
    <location>
        <position position="317"/>
    </location>
</feature>
<feature type="site" description="Required for function" evidence="1">
    <location>
        <position position="319"/>
    </location>
</feature>
<evidence type="ECO:0000255" key="1">
    <source>
        <dbReference type="HAMAP-Rule" id="MF_04009"/>
    </source>
</evidence>
<name>AN_EHV1B</name>
<reference key="1">
    <citation type="journal article" date="1992" name="Virology">
        <title>The DNA sequence of equine herpesvirus-1.</title>
        <authorList>
            <person name="Telford E.A.R."/>
            <person name="Watson M.S."/>
            <person name="McBride K."/>
            <person name="Davison A.J."/>
        </authorList>
    </citation>
    <scope>NUCLEOTIDE SEQUENCE [LARGE SCALE GENOMIC DNA]</scope>
</reference>
<reference key="2">
    <citation type="submission" date="2004-06" db="EMBL/GenBank/DDBJ databases">
        <authorList>
            <person name="Davison A.J."/>
        </authorList>
    </citation>
    <scope>SEQUENCE REVISION TO N-TERMINUS</scope>
</reference>
<sequence length="565" mass="62448">MDSSPVTYSGEPPYKLRRLSPSYPYVSKLRERCASKIETLSEGSARDSLEEEDVSEAMATGAFLATRLYLPSVLPQRITTLTFLDHFKKSRPLPNSDKRLNPIFYRLAYIRDLVGEMELEGIVERGTASRLLGASSPAGFVAGTYTHARDLSKTMSLASVRDAVLAIEAQTRDQSESQLWALLRRGLATASTMKWGALGPQYHPQWCEVSTNAKGIPNNPALQFGQTNERTARSLISALYVARSEAATPDLLVDPGCGQCFVFDESASVPGDAYACGLLMDARTGVVGASLDMLVCDRDPSGVLSPHSTQTTLDFFEIKCRAKYLFDPDLFSPVATAYANLLKHRTAVCLRKFLRSIKNPAVEYFAPTSVPGATEALITCNSSWKPREVNETNRRCGDFDRDHIALNLDASSDVWLFSEPDLESETITPARWDTGELALSVPVFANPRHPNFKQILVQAYVLSGHFPDHQLRPFLVTFIGRHRKRCEEGKTFTICDRPEGSPYNLNEVVHSSCAIPILLFVTPVIVDREGCWEDIEIESLTAFNKTADAIWDSDSPADVSEPTSS</sequence>
<proteinExistence type="inferred from homology"/>
<organism>
    <name type="scientific">Equine herpesvirus 1 (strain Ab4p)</name>
    <name type="common">EHV-1</name>
    <name type="synonym">Equine abortion virus</name>
    <dbReference type="NCBI Taxonomy" id="31520"/>
    <lineage>
        <taxon>Viruses</taxon>
        <taxon>Duplodnaviria</taxon>
        <taxon>Heunggongvirae</taxon>
        <taxon>Peploviricota</taxon>
        <taxon>Herviviricetes</taxon>
        <taxon>Herpesvirales</taxon>
        <taxon>Orthoherpesviridae</taxon>
        <taxon>Alphaherpesvirinae</taxon>
        <taxon>Varicellovirus</taxon>
        <taxon>Varicellovirus equidalpha1</taxon>
        <taxon>Equid alphaherpesvirus 1</taxon>
    </lineage>
</organism>